<gene>
    <name evidence="1" type="primary">clpP</name>
    <name type="ordered locus">YpsIP31758_3092</name>
</gene>
<organism>
    <name type="scientific">Yersinia pseudotuberculosis serotype O:1b (strain IP 31758)</name>
    <dbReference type="NCBI Taxonomy" id="349747"/>
    <lineage>
        <taxon>Bacteria</taxon>
        <taxon>Pseudomonadati</taxon>
        <taxon>Pseudomonadota</taxon>
        <taxon>Gammaproteobacteria</taxon>
        <taxon>Enterobacterales</taxon>
        <taxon>Yersiniaceae</taxon>
        <taxon>Yersinia</taxon>
    </lineage>
</organism>
<proteinExistence type="inferred from homology"/>
<comment type="function">
    <text evidence="1">Cleaves peptides in various proteins in a process that requires ATP hydrolysis. Has a chymotrypsin-like activity. Plays a major role in the degradation of misfolded proteins.</text>
</comment>
<comment type="catalytic activity">
    <reaction evidence="1">
        <text>Hydrolysis of proteins to small peptides in the presence of ATP and magnesium. alpha-casein is the usual test substrate. In the absence of ATP, only oligopeptides shorter than five residues are hydrolyzed (such as succinyl-Leu-Tyr-|-NHMec, and Leu-Tyr-Leu-|-Tyr-Trp, in which cleavage of the -Tyr-|-Leu- and -Tyr-|-Trp bonds also occurs).</text>
        <dbReference type="EC" id="3.4.21.92"/>
    </reaction>
</comment>
<comment type="subunit">
    <text evidence="1">Fourteen ClpP subunits assemble into 2 heptameric rings which stack back to back to give a disk-like structure with a central cavity, resembling the structure of eukaryotic proteasomes.</text>
</comment>
<comment type="subcellular location">
    <subcellularLocation>
        <location evidence="1">Cytoplasm</location>
    </subcellularLocation>
</comment>
<comment type="similarity">
    <text evidence="1">Belongs to the peptidase S14 family.</text>
</comment>
<name>CLPP_YERP3</name>
<reference key="1">
    <citation type="journal article" date="2007" name="PLoS Genet.">
        <title>The complete genome sequence of Yersinia pseudotuberculosis IP31758, the causative agent of Far East scarlet-like fever.</title>
        <authorList>
            <person name="Eppinger M."/>
            <person name="Rosovitz M.J."/>
            <person name="Fricke W.F."/>
            <person name="Rasko D.A."/>
            <person name="Kokorina G."/>
            <person name="Fayolle C."/>
            <person name="Lindler L.E."/>
            <person name="Carniel E."/>
            <person name="Ravel J."/>
        </authorList>
    </citation>
    <scope>NUCLEOTIDE SEQUENCE [LARGE SCALE GENOMIC DNA]</scope>
    <source>
        <strain>IP 31758</strain>
    </source>
</reference>
<accession>A7FLC4</accession>
<feature type="chain" id="PRO_1000060263" description="ATP-dependent Clp protease proteolytic subunit">
    <location>
        <begin position="1"/>
        <end position="207"/>
    </location>
</feature>
<feature type="active site" description="Nucleophile" evidence="1">
    <location>
        <position position="111"/>
    </location>
</feature>
<feature type="active site" evidence="1">
    <location>
        <position position="136"/>
    </location>
</feature>
<protein>
    <recommendedName>
        <fullName evidence="1">ATP-dependent Clp protease proteolytic subunit</fullName>
        <ecNumber evidence="1">3.4.21.92</ecNumber>
    </recommendedName>
    <alternativeName>
        <fullName evidence="1">Endopeptidase Clp</fullName>
    </alternativeName>
</protein>
<evidence type="ECO:0000255" key="1">
    <source>
        <dbReference type="HAMAP-Rule" id="MF_00444"/>
    </source>
</evidence>
<sequence length="207" mass="23320">MSYSGERDQFAPNMALVPMVVEQTSRGERSYDIFSRLLKERIIFLTGQVEDHMANLITAQMLFLEAENPEKDIFLYINSPGGVITAGMSIYDTMQFIKPDVSTICMGQACSMGAFLLTAGAKGKRFCLPNSRVMIHQPLGGFQGQATDIEIHAKEILKVKSRMNELMAYHTGKSLEEIERDTERDRFLSAEQSVEYGLVDSVFTRRD</sequence>
<dbReference type="EC" id="3.4.21.92" evidence="1"/>
<dbReference type="EMBL" id="CP000720">
    <property type="protein sequence ID" value="ABS49578.1"/>
    <property type="molecule type" value="Genomic_DNA"/>
</dbReference>
<dbReference type="RefSeq" id="WP_002208642.1">
    <property type="nucleotide sequence ID" value="NC_009708.1"/>
</dbReference>
<dbReference type="SMR" id="A7FLC4"/>
<dbReference type="MEROPS" id="S14.001"/>
<dbReference type="GeneID" id="96664465"/>
<dbReference type="KEGG" id="ypi:YpsIP31758_3092"/>
<dbReference type="HOGENOM" id="CLU_058707_3_2_6"/>
<dbReference type="Proteomes" id="UP000002412">
    <property type="component" value="Chromosome"/>
</dbReference>
<dbReference type="GO" id="GO:0005737">
    <property type="term" value="C:cytoplasm"/>
    <property type="evidence" value="ECO:0007669"/>
    <property type="project" value="UniProtKB-SubCell"/>
</dbReference>
<dbReference type="GO" id="GO:0009368">
    <property type="term" value="C:endopeptidase Clp complex"/>
    <property type="evidence" value="ECO:0007669"/>
    <property type="project" value="TreeGrafter"/>
</dbReference>
<dbReference type="GO" id="GO:0004176">
    <property type="term" value="F:ATP-dependent peptidase activity"/>
    <property type="evidence" value="ECO:0007669"/>
    <property type="project" value="InterPro"/>
</dbReference>
<dbReference type="GO" id="GO:0051117">
    <property type="term" value="F:ATPase binding"/>
    <property type="evidence" value="ECO:0007669"/>
    <property type="project" value="TreeGrafter"/>
</dbReference>
<dbReference type="GO" id="GO:0004252">
    <property type="term" value="F:serine-type endopeptidase activity"/>
    <property type="evidence" value="ECO:0007669"/>
    <property type="project" value="UniProtKB-UniRule"/>
</dbReference>
<dbReference type="GO" id="GO:0006515">
    <property type="term" value="P:protein quality control for misfolded or incompletely synthesized proteins"/>
    <property type="evidence" value="ECO:0007669"/>
    <property type="project" value="TreeGrafter"/>
</dbReference>
<dbReference type="CDD" id="cd07017">
    <property type="entry name" value="S14_ClpP_2"/>
    <property type="match status" value="1"/>
</dbReference>
<dbReference type="FunFam" id="3.90.226.10:FF:000001">
    <property type="entry name" value="ATP-dependent Clp protease proteolytic subunit"/>
    <property type="match status" value="1"/>
</dbReference>
<dbReference type="Gene3D" id="3.90.226.10">
    <property type="entry name" value="2-enoyl-CoA Hydratase, Chain A, domain 1"/>
    <property type="match status" value="1"/>
</dbReference>
<dbReference type="HAMAP" id="MF_00444">
    <property type="entry name" value="ClpP"/>
    <property type="match status" value="1"/>
</dbReference>
<dbReference type="InterPro" id="IPR001907">
    <property type="entry name" value="ClpP"/>
</dbReference>
<dbReference type="InterPro" id="IPR029045">
    <property type="entry name" value="ClpP/crotonase-like_dom_sf"/>
</dbReference>
<dbReference type="InterPro" id="IPR023562">
    <property type="entry name" value="ClpP/TepA"/>
</dbReference>
<dbReference type="InterPro" id="IPR033135">
    <property type="entry name" value="ClpP_His_AS"/>
</dbReference>
<dbReference type="InterPro" id="IPR018215">
    <property type="entry name" value="ClpP_Ser_AS"/>
</dbReference>
<dbReference type="NCBIfam" id="TIGR00493">
    <property type="entry name" value="clpP"/>
    <property type="match status" value="1"/>
</dbReference>
<dbReference type="NCBIfam" id="NF001368">
    <property type="entry name" value="PRK00277.1"/>
    <property type="match status" value="1"/>
</dbReference>
<dbReference type="NCBIfam" id="NF009205">
    <property type="entry name" value="PRK12553.1"/>
    <property type="match status" value="1"/>
</dbReference>
<dbReference type="PANTHER" id="PTHR10381">
    <property type="entry name" value="ATP-DEPENDENT CLP PROTEASE PROTEOLYTIC SUBUNIT"/>
    <property type="match status" value="1"/>
</dbReference>
<dbReference type="PANTHER" id="PTHR10381:SF70">
    <property type="entry name" value="ATP-DEPENDENT CLP PROTEASE PROTEOLYTIC SUBUNIT"/>
    <property type="match status" value="1"/>
</dbReference>
<dbReference type="Pfam" id="PF00574">
    <property type="entry name" value="CLP_protease"/>
    <property type="match status" value="1"/>
</dbReference>
<dbReference type="PRINTS" id="PR00127">
    <property type="entry name" value="CLPPROTEASEP"/>
</dbReference>
<dbReference type="SUPFAM" id="SSF52096">
    <property type="entry name" value="ClpP/crotonase"/>
    <property type="match status" value="1"/>
</dbReference>
<dbReference type="PROSITE" id="PS00382">
    <property type="entry name" value="CLP_PROTEASE_HIS"/>
    <property type="match status" value="1"/>
</dbReference>
<dbReference type="PROSITE" id="PS00381">
    <property type="entry name" value="CLP_PROTEASE_SER"/>
    <property type="match status" value="1"/>
</dbReference>
<keyword id="KW-0963">Cytoplasm</keyword>
<keyword id="KW-0378">Hydrolase</keyword>
<keyword id="KW-0645">Protease</keyword>
<keyword id="KW-0720">Serine protease</keyword>